<name>ARGD2_BORBR</name>
<comment type="catalytic activity">
    <reaction evidence="1">
        <text>N(2)-acetyl-L-ornithine + 2-oxoglutarate = N-acetyl-L-glutamate 5-semialdehyde + L-glutamate</text>
        <dbReference type="Rhea" id="RHEA:18049"/>
        <dbReference type="ChEBI" id="CHEBI:16810"/>
        <dbReference type="ChEBI" id="CHEBI:29123"/>
        <dbReference type="ChEBI" id="CHEBI:29985"/>
        <dbReference type="ChEBI" id="CHEBI:57805"/>
        <dbReference type="EC" id="2.6.1.11"/>
    </reaction>
</comment>
<comment type="cofactor">
    <cofactor evidence="1">
        <name>pyridoxal 5'-phosphate</name>
        <dbReference type="ChEBI" id="CHEBI:597326"/>
    </cofactor>
    <text evidence="1">Binds 1 pyridoxal phosphate per subunit.</text>
</comment>
<comment type="pathway">
    <text evidence="1">Amino-acid biosynthesis; L-arginine biosynthesis; N(2)-acetyl-L-ornithine from L-glutamate: step 4/4.</text>
</comment>
<comment type="subunit">
    <text evidence="1">Homodimer.</text>
</comment>
<comment type="subcellular location">
    <subcellularLocation>
        <location evidence="1">Cytoplasm</location>
    </subcellularLocation>
</comment>
<comment type="miscellaneous">
    <text evidence="1">May also have succinyldiaminopimelate aminotransferase activity, thus carrying out the corresponding step in lysine biosynthesis.</text>
</comment>
<comment type="similarity">
    <text evidence="1">Belongs to the class-III pyridoxal-phosphate-dependent aminotransferase family. ArgD subfamily.</text>
</comment>
<gene>
    <name evidence="1" type="primary">argD2</name>
    <name type="ordered locus">BB4951</name>
</gene>
<organism>
    <name type="scientific">Bordetella bronchiseptica (strain ATCC BAA-588 / NCTC 13252 / RB50)</name>
    <name type="common">Alcaligenes bronchisepticus</name>
    <dbReference type="NCBI Taxonomy" id="257310"/>
    <lineage>
        <taxon>Bacteria</taxon>
        <taxon>Pseudomonadati</taxon>
        <taxon>Pseudomonadota</taxon>
        <taxon>Betaproteobacteria</taxon>
        <taxon>Burkholderiales</taxon>
        <taxon>Alcaligenaceae</taxon>
        <taxon>Bordetella</taxon>
    </lineage>
</organism>
<evidence type="ECO:0000255" key="1">
    <source>
        <dbReference type="HAMAP-Rule" id="MF_01107"/>
    </source>
</evidence>
<dbReference type="EC" id="2.6.1.11" evidence="1"/>
<dbReference type="EMBL" id="BX640452">
    <property type="protein sequence ID" value="CAE35315.1"/>
    <property type="molecule type" value="Genomic_DNA"/>
</dbReference>
<dbReference type="RefSeq" id="WP_003815956.1">
    <property type="nucleotide sequence ID" value="NC_002927.3"/>
</dbReference>
<dbReference type="SMR" id="Q7WDN7"/>
<dbReference type="KEGG" id="bbr:BB4951"/>
<dbReference type="eggNOG" id="COG4992">
    <property type="taxonomic scope" value="Bacteria"/>
</dbReference>
<dbReference type="HOGENOM" id="CLU_016922_10_1_4"/>
<dbReference type="UniPathway" id="UPA00068">
    <property type="reaction ID" value="UER00109"/>
</dbReference>
<dbReference type="Proteomes" id="UP000001027">
    <property type="component" value="Chromosome"/>
</dbReference>
<dbReference type="GO" id="GO:0005737">
    <property type="term" value="C:cytoplasm"/>
    <property type="evidence" value="ECO:0007669"/>
    <property type="project" value="UniProtKB-SubCell"/>
</dbReference>
<dbReference type="GO" id="GO:0042802">
    <property type="term" value="F:identical protein binding"/>
    <property type="evidence" value="ECO:0007669"/>
    <property type="project" value="TreeGrafter"/>
</dbReference>
<dbReference type="GO" id="GO:0003992">
    <property type="term" value="F:N2-acetyl-L-ornithine:2-oxoglutarate 5-aminotransferase activity"/>
    <property type="evidence" value="ECO:0007669"/>
    <property type="project" value="UniProtKB-UniRule"/>
</dbReference>
<dbReference type="GO" id="GO:0030170">
    <property type="term" value="F:pyridoxal phosphate binding"/>
    <property type="evidence" value="ECO:0007669"/>
    <property type="project" value="InterPro"/>
</dbReference>
<dbReference type="GO" id="GO:0006526">
    <property type="term" value="P:L-arginine biosynthetic process"/>
    <property type="evidence" value="ECO:0007669"/>
    <property type="project" value="UniProtKB-UniRule"/>
</dbReference>
<dbReference type="CDD" id="cd00610">
    <property type="entry name" value="OAT_like"/>
    <property type="match status" value="1"/>
</dbReference>
<dbReference type="FunFam" id="3.40.640.10:FF:000004">
    <property type="entry name" value="Acetylornithine aminotransferase"/>
    <property type="match status" value="1"/>
</dbReference>
<dbReference type="Gene3D" id="3.90.1150.10">
    <property type="entry name" value="Aspartate Aminotransferase, domain 1"/>
    <property type="match status" value="1"/>
</dbReference>
<dbReference type="Gene3D" id="3.40.640.10">
    <property type="entry name" value="Type I PLP-dependent aspartate aminotransferase-like (Major domain)"/>
    <property type="match status" value="1"/>
</dbReference>
<dbReference type="HAMAP" id="MF_01107">
    <property type="entry name" value="ArgD_aminotrans_3"/>
    <property type="match status" value="1"/>
</dbReference>
<dbReference type="InterPro" id="IPR004636">
    <property type="entry name" value="AcOrn/SuccOrn_fam"/>
</dbReference>
<dbReference type="InterPro" id="IPR005814">
    <property type="entry name" value="Aminotrans_3"/>
</dbReference>
<dbReference type="InterPro" id="IPR049704">
    <property type="entry name" value="Aminotrans_3_PPA_site"/>
</dbReference>
<dbReference type="InterPro" id="IPR050103">
    <property type="entry name" value="Class-III_PLP-dep_AT"/>
</dbReference>
<dbReference type="InterPro" id="IPR015424">
    <property type="entry name" value="PyrdxlP-dep_Trfase"/>
</dbReference>
<dbReference type="InterPro" id="IPR015421">
    <property type="entry name" value="PyrdxlP-dep_Trfase_major"/>
</dbReference>
<dbReference type="InterPro" id="IPR015422">
    <property type="entry name" value="PyrdxlP-dep_Trfase_small"/>
</dbReference>
<dbReference type="NCBIfam" id="NF002325">
    <property type="entry name" value="PRK01278.1"/>
    <property type="match status" value="1"/>
</dbReference>
<dbReference type="NCBIfam" id="NF002985">
    <property type="entry name" value="PRK03715.1"/>
    <property type="match status" value="1"/>
</dbReference>
<dbReference type="PANTHER" id="PTHR11986:SF79">
    <property type="entry name" value="ACETYLORNITHINE AMINOTRANSFERASE, MITOCHONDRIAL"/>
    <property type="match status" value="1"/>
</dbReference>
<dbReference type="PANTHER" id="PTHR11986">
    <property type="entry name" value="AMINOTRANSFERASE CLASS III"/>
    <property type="match status" value="1"/>
</dbReference>
<dbReference type="Pfam" id="PF00202">
    <property type="entry name" value="Aminotran_3"/>
    <property type="match status" value="1"/>
</dbReference>
<dbReference type="PIRSF" id="PIRSF000521">
    <property type="entry name" value="Transaminase_4ab_Lys_Orn"/>
    <property type="match status" value="1"/>
</dbReference>
<dbReference type="SUPFAM" id="SSF53383">
    <property type="entry name" value="PLP-dependent transferases"/>
    <property type="match status" value="1"/>
</dbReference>
<dbReference type="PROSITE" id="PS00600">
    <property type="entry name" value="AA_TRANSFER_CLASS_3"/>
    <property type="match status" value="1"/>
</dbReference>
<feature type="chain" id="PRO_0000112724" description="Acetylornithine aminotransferase 2">
    <location>
        <begin position="1"/>
        <end position="396"/>
    </location>
</feature>
<feature type="binding site" evidence="1">
    <location>
        <begin position="102"/>
        <end position="103"/>
    </location>
    <ligand>
        <name>pyridoxal 5'-phosphate</name>
        <dbReference type="ChEBI" id="CHEBI:597326"/>
    </ligand>
</feature>
<feature type="binding site" evidence="1">
    <location>
        <position position="134"/>
    </location>
    <ligand>
        <name>pyridoxal 5'-phosphate</name>
        <dbReference type="ChEBI" id="CHEBI:597326"/>
    </ligand>
</feature>
<feature type="binding site" evidence="1">
    <location>
        <position position="137"/>
    </location>
    <ligand>
        <name>N(2)-acetyl-L-ornithine</name>
        <dbReference type="ChEBI" id="CHEBI:57805"/>
    </ligand>
</feature>
<feature type="binding site" evidence="1">
    <location>
        <begin position="219"/>
        <end position="222"/>
    </location>
    <ligand>
        <name>pyridoxal 5'-phosphate</name>
        <dbReference type="ChEBI" id="CHEBI:597326"/>
    </ligand>
</feature>
<feature type="binding site" evidence="1">
    <location>
        <position position="276"/>
    </location>
    <ligand>
        <name>pyridoxal 5'-phosphate</name>
        <dbReference type="ChEBI" id="CHEBI:597326"/>
    </ligand>
</feature>
<feature type="modified residue" description="N6-(pyridoxal phosphate)lysine" evidence="1">
    <location>
        <position position="248"/>
    </location>
</feature>
<proteinExistence type="inferred from homology"/>
<sequence length="396" mass="42802">MEFSQFKVNALMEITARPDLVFVRGQGSWLEDHAGKRYLDFVQGWAVNTLGHCAPEMKRALAEQADKLMNPSPAFYNLPSIELAQRLTSASCFDRVFFANSGAEANEGAIKLARKWGRVNRNGAYKIITMNHGFHGRTLATMSASGKPGWDTMFAPQVEGFPKAEINDLDSVRALIDAQTVAVMLEPVQGEAGVIPATREFMQGLRKLADEHGILFIVDEVQTGMGRTGSLFAYQQFDVIPDIMTLAKGIGGGIPLAALLAREEVCVFAHGDQGGTYNGNPLCAAVGVAVFDTITAPGFMEAAQARTRQLSEGLLALSAKRGLRGERGMGLLRALVLDRDDAPAIVEAARMLAPEGLLLNAPRGNLLRFMPALNVTEADMARMLEQLDGVIAAVRK</sequence>
<keyword id="KW-0028">Amino-acid biosynthesis</keyword>
<keyword id="KW-0032">Aminotransferase</keyword>
<keyword id="KW-0055">Arginine biosynthesis</keyword>
<keyword id="KW-0963">Cytoplasm</keyword>
<keyword id="KW-0663">Pyridoxal phosphate</keyword>
<keyword id="KW-0808">Transferase</keyword>
<accession>Q7WDN7</accession>
<protein>
    <recommendedName>
        <fullName evidence="1">Acetylornithine aminotransferase 2</fullName>
        <shortName evidence="1">ACOAT 2</shortName>
        <ecNumber evidence="1">2.6.1.11</ecNumber>
    </recommendedName>
</protein>
<reference key="1">
    <citation type="journal article" date="2003" name="Nat. Genet.">
        <title>Comparative analysis of the genome sequences of Bordetella pertussis, Bordetella parapertussis and Bordetella bronchiseptica.</title>
        <authorList>
            <person name="Parkhill J."/>
            <person name="Sebaihia M."/>
            <person name="Preston A."/>
            <person name="Murphy L.D."/>
            <person name="Thomson N.R."/>
            <person name="Harris D.E."/>
            <person name="Holden M.T.G."/>
            <person name="Churcher C.M."/>
            <person name="Bentley S.D."/>
            <person name="Mungall K.L."/>
            <person name="Cerdeno-Tarraga A.-M."/>
            <person name="Temple L."/>
            <person name="James K.D."/>
            <person name="Harris B."/>
            <person name="Quail M.A."/>
            <person name="Achtman M."/>
            <person name="Atkin R."/>
            <person name="Baker S."/>
            <person name="Basham D."/>
            <person name="Bason N."/>
            <person name="Cherevach I."/>
            <person name="Chillingworth T."/>
            <person name="Collins M."/>
            <person name="Cronin A."/>
            <person name="Davis P."/>
            <person name="Doggett J."/>
            <person name="Feltwell T."/>
            <person name="Goble A."/>
            <person name="Hamlin N."/>
            <person name="Hauser H."/>
            <person name="Holroyd S."/>
            <person name="Jagels K."/>
            <person name="Leather S."/>
            <person name="Moule S."/>
            <person name="Norberczak H."/>
            <person name="O'Neil S."/>
            <person name="Ormond D."/>
            <person name="Price C."/>
            <person name="Rabbinowitsch E."/>
            <person name="Rutter S."/>
            <person name="Sanders M."/>
            <person name="Saunders D."/>
            <person name="Seeger K."/>
            <person name="Sharp S."/>
            <person name="Simmonds M."/>
            <person name="Skelton J."/>
            <person name="Squares R."/>
            <person name="Squares S."/>
            <person name="Stevens K."/>
            <person name="Unwin L."/>
            <person name="Whitehead S."/>
            <person name="Barrell B.G."/>
            <person name="Maskell D.J."/>
        </authorList>
    </citation>
    <scope>NUCLEOTIDE SEQUENCE [LARGE SCALE GENOMIC DNA]</scope>
    <source>
        <strain>ATCC BAA-588 / NCTC 13252 / RB50</strain>
    </source>
</reference>